<name>DCUP_STACT</name>
<organism>
    <name type="scientific">Staphylococcus carnosus (strain TM300)</name>
    <dbReference type="NCBI Taxonomy" id="396513"/>
    <lineage>
        <taxon>Bacteria</taxon>
        <taxon>Bacillati</taxon>
        <taxon>Bacillota</taxon>
        <taxon>Bacilli</taxon>
        <taxon>Bacillales</taxon>
        <taxon>Staphylococcaceae</taxon>
        <taxon>Staphylococcus</taxon>
    </lineage>
</organism>
<proteinExistence type="inferred from homology"/>
<accession>B9DN00</accession>
<comment type="function">
    <text evidence="1">Catalyzes the decarboxylation of four acetate groups of uroporphyrinogen-III to yield coproporphyrinogen-III.</text>
</comment>
<comment type="catalytic activity">
    <reaction evidence="1">
        <text>uroporphyrinogen III + 4 H(+) = coproporphyrinogen III + 4 CO2</text>
        <dbReference type="Rhea" id="RHEA:19865"/>
        <dbReference type="ChEBI" id="CHEBI:15378"/>
        <dbReference type="ChEBI" id="CHEBI:16526"/>
        <dbReference type="ChEBI" id="CHEBI:57308"/>
        <dbReference type="ChEBI" id="CHEBI:57309"/>
        <dbReference type="EC" id="4.1.1.37"/>
    </reaction>
</comment>
<comment type="pathway">
    <text evidence="1">Porphyrin-containing compound metabolism; protoporphyrin-IX biosynthesis; coproporphyrinogen-III from 5-aminolevulinate: step 4/4.</text>
</comment>
<comment type="subunit">
    <text evidence="1">Homodimer.</text>
</comment>
<comment type="subcellular location">
    <subcellularLocation>
        <location evidence="1">Cytoplasm</location>
    </subcellularLocation>
</comment>
<comment type="similarity">
    <text evidence="1">Belongs to the uroporphyrinogen decarboxylase family.</text>
</comment>
<sequence>MHSKNNTILKMIKGEEVTHTPVWFMRQAGRSQPEYRALKEKYSLFEITHQPELCAYVTHLPVDNYQTDAAILYKDIMTPLKPIGVDVEIKSGIGPVISNTIKTVQDVEKLGQIDPKRDVPYVLDTIKLLTEEKLNVPLIGFVGAPFTLASYMIEGGPSKNYHFTKAMMFRDEATWFALMDHLVDMSITYASAQIEAGAELIQIFDSWIGALNAVDFNYYIKPSMERLIKGIKAQHDVPIILFGVNATHLIEEWNNLPIDVLGIDWRTTIKETSDSGVAKTIQGNLDPSLLLAPWDVIQPRLDKILDEGMQHGKHIFNLGHGVFPEVNPDTLKQITAYVHDYTKRK</sequence>
<keyword id="KW-0963">Cytoplasm</keyword>
<keyword id="KW-0210">Decarboxylase</keyword>
<keyword id="KW-0456">Lyase</keyword>
<keyword id="KW-0627">Porphyrin biosynthesis</keyword>
<keyword id="KW-1185">Reference proteome</keyword>
<dbReference type="EC" id="4.1.1.37" evidence="1"/>
<dbReference type="EMBL" id="AM295250">
    <property type="protein sequence ID" value="CAL28313.1"/>
    <property type="molecule type" value="Genomic_DNA"/>
</dbReference>
<dbReference type="SMR" id="B9DN00"/>
<dbReference type="KEGG" id="sca:SCA_1408"/>
<dbReference type="eggNOG" id="COG0407">
    <property type="taxonomic scope" value="Bacteria"/>
</dbReference>
<dbReference type="HOGENOM" id="CLU_040933_0_1_9"/>
<dbReference type="BioCyc" id="SCAR396513:SCA_RS07035-MONOMER"/>
<dbReference type="UniPathway" id="UPA00251">
    <property type="reaction ID" value="UER00321"/>
</dbReference>
<dbReference type="Proteomes" id="UP000000444">
    <property type="component" value="Chromosome"/>
</dbReference>
<dbReference type="GO" id="GO:0005829">
    <property type="term" value="C:cytosol"/>
    <property type="evidence" value="ECO:0007669"/>
    <property type="project" value="TreeGrafter"/>
</dbReference>
<dbReference type="GO" id="GO:0004853">
    <property type="term" value="F:uroporphyrinogen decarboxylase activity"/>
    <property type="evidence" value="ECO:0007669"/>
    <property type="project" value="UniProtKB-UniRule"/>
</dbReference>
<dbReference type="GO" id="GO:0006782">
    <property type="term" value="P:protoporphyrinogen IX biosynthetic process"/>
    <property type="evidence" value="ECO:0007669"/>
    <property type="project" value="UniProtKB-UniRule"/>
</dbReference>
<dbReference type="CDD" id="cd00717">
    <property type="entry name" value="URO-D"/>
    <property type="match status" value="1"/>
</dbReference>
<dbReference type="FunFam" id="3.20.20.210:FF:000005">
    <property type="entry name" value="Uroporphyrinogen decarboxylase"/>
    <property type="match status" value="1"/>
</dbReference>
<dbReference type="Gene3D" id="3.20.20.210">
    <property type="match status" value="1"/>
</dbReference>
<dbReference type="HAMAP" id="MF_00218">
    <property type="entry name" value="URO_D"/>
    <property type="match status" value="1"/>
</dbReference>
<dbReference type="InterPro" id="IPR038071">
    <property type="entry name" value="UROD/MetE-like_sf"/>
</dbReference>
<dbReference type="InterPro" id="IPR006361">
    <property type="entry name" value="Uroporphyrinogen_deCO2ase_HemE"/>
</dbReference>
<dbReference type="InterPro" id="IPR000257">
    <property type="entry name" value="Uroporphyrinogen_deCOase"/>
</dbReference>
<dbReference type="NCBIfam" id="TIGR01464">
    <property type="entry name" value="hemE"/>
    <property type="match status" value="1"/>
</dbReference>
<dbReference type="PANTHER" id="PTHR21091">
    <property type="entry name" value="METHYLTETRAHYDROFOLATE:HOMOCYSTEINE METHYLTRANSFERASE RELATED"/>
    <property type="match status" value="1"/>
</dbReference>
<dbReference type="PANTHER" id="PTHR21091:SF169">
    <property type="entry name" value="UROPORPHYRINOGEN DECARBOXYLASE"/>
    <property type="match status" value="1"/>
</dbReference>
<dbReference type="Pfam" id="PF01208">
    <property type="entry name" value="URO-D"/>
    <property type="match status" value="1"/>
</dbReference>
<dbReference type="SUPFAM" id="SSF51726">
    <property type="entry name" value="UROD/MetE-like"/>
    <property type="match status" value="1"/>
</dbReference>
<dbReference type="PROSITE" id="PS00906">
    <property type="entry name" value="UROD_1"/>
    <property type="match status" value="1"/>
</dbReference>
<dbReference type="PROSITE" id="PS00907">
    <property type="entry name" value="UROD_2"/>
    <property type="match status" value="1"/>
</dbReference>
<evidence type="ECO:0000255" key="1">
    <source>
        <dbReference type="HAMAP-Rule" id="MF_00218"/>
    </source>
</evidence>
<reference key="1">
    <citation type="journal article" date="2009" name="Appl. Environ. Microbiol.">
        <title>Genome analysis of the meat starter culture bacterium Staphylococcus carnosus TM300.</title>
        <authorList>
            <person name="Rosenstein R."/>
            <person name="Nerz C."/>
            <person name="Biswas L."/>
            <person name="Resch A."/>
            <person name="Raddatz G."/>
            <person name="Schuster S.C."/>
            <person name="Goetz F."/>
        </authorList>
    </citation>
    <scope>NUCLEOTIDE SEQUENCE [LARGE SCALE GENOMIC DNA]</scope>
    <source>
        <strain>TM300</strain>
    </source>
</reference>
<protein>
    <recommendedName>
        <fullName evidence="1">Uroporphyrinogen decarboxylase</fullName>
        <shortName evidence="1">UPD</shortName>
        <shortName evidence="1">URO-D</shortName>
        <ecNumber evidence="1">4.1.1.37</ecNumber>
    </recommendedName>
</protein>
<gene>
    <name evidence="1" type="primary">hemE</name>
    <name type="ordered locus">Sca_1408</name>
</gene>
<feature type="chain" id="PRO_1000197540" description="Uroporphyrinogen decarboxylase">
    <location>
        <begin position="1"/>
        <end position="345"/>
    </location>
</feature>
<feature type="binding site" evidence="1">
    <location>
        <begin position="26"/>
        <end position="30"/>
    </location>
    <ligand>
        <name>substrate</name>
    </ligand>
</feature>
<feature type="binding site" evidence="1">
    <location>
        <position position="45"/>
    </location>
    <ligand>
        <name>substrate</name>
    </ligand>
</feature>
<feature type="binding site" evidence="1">
    <location>
        <position position="75"/>
    </location>
    <ligand>
        <name>substrate</name>
    </ligand>
</feature>
<feature type="binding site" evidence="1">
    <location>
        <position position="151"/>
    </location>
    <ligand>
        <name>substrate</name>
    </ligand>
</feature>
<feature type="binding site" evidence="1">
    <location>
        <position position="206"/>
    </location>
    <ligand>
        <name>substrate</name>
    </ligand>
</feature>
<feature type="binding site" evidence="1">
    <location>
        <position position="320"/>
    </location>
    <ligand>
        <name>substrate</name>
    </ligand>
</feature>
<feature type="site" description="Transition state stabilizer" evidence="1">
    <location>
        <position position="75"/>
    </location>
</feature>